<keyword id="KW-0067">ATP-binding</keyword>
<keyword id="KW-0963">Cytoplasm</keyword>
<keyword id="KW-1015">Disulfide bond</keyword>
<keyword id="KW-0547">Nucleotide-binding</keyword>
<keyword id="KW-1185">Reference proteome</keyword>
<keyword id="KW-0694">RNA-binding</keyword>
<keyword id="KW-0808">Transferase</keyword>
<keyword id="KW-0819">tRNA processing</keyword>
<keyword id="KW-0820">tRNA-binding</keyword>
<reference key="1">
    <citation type="journal article" date="2003" name="Proc. Natl. Acad. Sci. U.S.A.">
        <title>The complete genome sequence of the carcinogenic bacterium Helicobacter hepaticus.</title>
        <authorList>
            <person name="Suerbaum S."/>
            <person name="Josenhans C."/>
            <person name="Sterzenbach T."/>
            <person name="Drescher B."/>
            <person name="Brandt P."/>
            <person name="Bell M."/>
            <person name="Droege M."/>
            <person name="Fartmann B."/>
            <person name="Fischer H.-P."/>
            <person name="Ge Z."/>
            <person name="Hoerster A."/>
            <person name="Holland R."/>
            <person name="Klein K."/>
            <person name="Koenig J."/>
            <person name="Macko L."/>
            <person name="Mendz G.L."/>
            <person name="Nyakatura G."/>
            <person name="Schauer D.B."/>
            <person name="Shen Z."/>
            <person name="Weber J."/>
            <person name="Frosch M."/>
            <person name="Fox J.G."/>
        </authorList>
    </citation>
    <scope>NUCLEOTIDE SEQUENCE [LARGE SCALE GENOMIC DNA]</scope>
    <source>
        <strain>ATCC 51449 / 3B1</strain>
    </source>
</reference>
<proteinExistence type="inferred from homology"/>
<gene>
    <name evidence="1" type="primary">mnmA</name>
    <name type="ordered locus">HH_0956</name>
</gene>
<dbReference type="EC" id="2.8.1.13" evidence="1"/>
<dbReference type="EMBL" id="AE017125">
    <property type="protein sequence ID" value="AAP77553.1"/>
    <property type="molecule type" value="Genomic_DNA"/>
</dbReference>
<dbReference type="RefSeq" id="WP_011115796.1">
    <property type="nucleotide sequence ID" value="NC_004917.1"/>
</dbReference>
<dbReference type="SMR" id="Q7U320"/>
<dbReference type="STRING" id="235279.HH_0956"/>
<dbReference type="KEGG" id="hhe:HH_0956"/>
<dbReference type="eggNOG" id="COG0482">
    <property type="taxonomic scope" value="Bacteria"/>
</dbReference>
<dbReference type="HOGENOM" id="CLU_035188_0_0_7"/>
<dbReference type="Proteomes" id="UP000002495">
    <property type="component" value="Chromosome"/>
</dbReference>
<dbReference type="GO" id="GO:0005737">
    <property type="term" value="C:cytoplasm"/>
    <property type="evidence" value="ECO:0007669"/>
    <property type="project" value="UniProtKB-SubCell"/>
</dbReference>
<dbReference type="GO" id="GO:0005524">
    <property type="term" value="F:ATP binding"/>
    <property type="evidence" value="ECO:0007669"/>
    <property type="project" value="UniProtKB-KW"/>
</dbReference>
<dbReference type="GO" id="GO:0000049">
    <property type="term" value="F:tRNA binding"/>
    <property type="evidence" value="ECO:0007669"/>
    <property type="project" value="UniProtKB-KW"/>
</dbReference>
<dbReference type="GO" id="GO:0103016">
    <property type="term" value="F:tRNA-uridine 2-sulfurtransferase activity"/>
    <property type="evidence" value="ECO:0007669"/>
    <property type="project" value="UniProtKB-EC"/>
</dbReference>
<dbReference type="GO" id="GO:0002143">
    <property type="term" value="P:tRNA wobble position uridine thiolation"/>
    <property type="evidence" value="ECO:0007669"/>
    <property type="project" value="TreeGrafter"/>
</dbReference>
<dbReference type="CDD" id="cd01998">
    <property type="entry name" value="MnmA_TRMU-like"/>
    <property type="match status" value="1"/>
</dbReference>
<dbReference type="Gene3D" id="2.30.30.280">
    <property type="entry name" value="Adenine nucleotide alpha hydrolases-like domains"/>
    <property type="match status" value="1"/>
</dbReference>
<dbReference type="Gene3D" id="3.40.50.620">
    <property type="entry name" value="HUPs"/>
    <property type="match status" value="1"/>
</dbReference>
<dbReference type="Gene3D" id="2.40.30.10">
    <property type="entry name" value="Translation factors"/>
    <property type="match status" value="1"/>
</dbReference>
<dbReference type="HAMAP" id="MF_00144">
    <property type="entry name" value="tRNA_thiouridyl_MnmA"/>
    <property type="match status" value="1"/>
</dbReference>
<dbReference type="InterPro" id="IPR004506">
    <property type="entry name" value="MnmA-like"/>
</dbReference>
<dbReference type="InterPro" id="IPR046885">
    <property type="entry name" value="MnmA-like_C"/>
</dbReference>
<dbReference type="InterPro" id="IPR046884">
    <property type="entry name" value="MnmA-like_central"/>
</dbReference>
<dbReference type="InterPro" id="IPR023382">
    <property type="entry name" value="MnmA-like_central_sf"/>
</dbReference>
<dbReference type="InterPro" id="IPR014729">
    <property type="entry name" value="Rossmann-like_a/b/a_fold"/>
</dbReference>
<dbReference type="NCBIfam" id="NF001138">
    <property type="entry name" value="PRK00143.1"/>
    <property type="match status" value="1"/>
</dbReference>
<dbReference type="NCBIfam" id="TIGR00420">
    <property type="entry name" value="trmU"/>
    <property type="match status" value="1"/>
</dbReference>
<dbReference type="PANTHER" id="PTHR11933:SF5">
    <property type="entry name" value="MITOCHONDRIAL TRNA-SPECIFIC 2-THIOURIDYLASE 1"/>
    <property type="match status" value="1"/>
</dbReference>
<dbReference type="PANTHER" id="PTHR11933">
    <property type="entry name" value="TRNA 5-METHYLAMINOMETHYL-2-THIOURIDYLATE -METHYLTRANSFERASE"/>
    <property type="match status" value="1"/>
</dbReference>
<dbReference type="Pfam" id="PF03054">
    <property type="entry name" value="tRNA_Me_trans"/>
    <property type="match status" value="1"/>
</dbReference>
<dbReference type="Pfam" id="PF20258">
    <property type="entry name" value="tRNA_Me_trans_C"/>
    <property type="match status" value="1"/>
</dbReference>
<dbReference type="Pfam" id="PF20259">
    <property type="entry name" value="tRNA_Me_trans_M"/>
    <property type="match status" value="1"/>
</dbReference>
<dbReference type="SUPFAM" id="SSF52402">
    <property type="entry name" value="Adenine nucleotide alpha hydrolases-like"/>
    <property type="match status" value="1"/>
</dbReference>
<evidence type="ECO:0000255" key="1">
    <source>
        <dbReference type="HAMAP-Rule" id="MF_00144"/>
    </source>
</evidence>
<organism>
    <name type="scientific">Helicobacter hepaticus (strain ATCC 51449 / 3B1)</name>
    <dbReference type="NCBI Taxonomy" id="235279"/>
    <lineage>
        <taxon>Bacteria</taxon>
        <taxon>Pseudomonadati</taxon>
        <taxon>Campylobacterota</taxon>
        <taxon>Epsilonproteobacteria</taxon>
        <taxon>Campylobacterales</taxon>
        <taxon>Helicobacteraceae</taxon>
        <taxon>Helicobacter</taxon>
    </lineage>
</organism>
<sequence length="345" mass="38420">MKVALLMSGGVDSSYCAHLLSSQGYEVIGIYLKLHDKNKKHDIYIANCEQVAAHLHIDFQVLDLREEFKKSVYDTFVSSYKEGKTPNPCAICNPLMKFGLGLQKALELGCDYIATGHYAQIKEVNGIKRIAKAVDESKDQSYFLYALPQEAIDRIIFPLGALLKEDIKKTALELLPFLGTLQTYKESQEICFVEQSYIDILKLHDKVDNEGVVRNSNGKAIGTHKGYMHYTIGKRKGFSVFGSHEPHYVKAINPQNNEIVVGTKEELAIDSIKALNKSLPQAFNGGIYDVKVRYRSTPLKAQIDIQGEFIYAKLLESAYGVAQGQALVLYQEDCVLGGGVITQAQ</sequence>
<comment type="function">
    <text evidence="1">Catalyzes the 2-thiolation of uridine at the wobble position (U34) of tRNA, leading to the formation of s(2)U34.</text>
</comment>
<comment type="catalytic activity">
    <reaction evidence="1">
        <text>S-sulfanyl-L-cysteinyl-[protein] + uridine(34) in tRNA + AH2 + ATP = 2-thiouridine(34) in tRNA + L-cysteinyl-[protein] + A + AMP + diphosphate + H(+)</text>
        <dbReference type="Rhea" id="RHEA:47032"/>
        <dbReference type="Rhea" id="RHEA-COMP:10131"/>
        <dbReference type="Rhea" id="RHEA-COMP:11726"/>
        <dbReference type="Rhea" id="RHEA-COMP:11727"/>
        <dbReference type="Rhea" id="RHEA-COMP:11728"/>
        <dbReference type="ChEBI" id="CHEBI:13193"/>
        <dbReference type="ChEBI" id="CHEBI:15378"/>
        <dbReference type="ChEBI" id="CHEBI:17499"/>
        <dbReference type="ChEBI" id="CHEBI:29950"/>
        <dbReference type="ChEBI" id="CHEBI:30616"/>
        <dbReference type="ChEBI" id="CHEBI:33019"/>
        <dbReference type="ChEBI" id="CHEBI:61963"/>
        <dbReference type="ChEBI" id="CHEBI:65315"/>
        <dbReference type="ChEBI" id="CHEBI:87170"/>
        <dbReference type="ChEBI" id="CHEBI:456215"/>
        <dbReference type="EC" id="2.8.1.13"/>
    </reaction>
</comment>
<comment type="subcellular location">
    <subcellularLocation>
        <location evidence="1">Cytoplasm</location>
    </subcellularLocation>
</comment>
<comment type="similarity">
    <text evidence="1">Belongs to the MnmA/TRMU family.</text>
</comment>
<feature type="chain" id="PRO_0000349659" description="tRNA-specific 2-thiouridylase MnmA">
    <location>
        <begin position="1"/>
        <end position="345"/>
    </location>
</feature>
<feature type="region of interest" description="Interaction with tRNA" evidence="1">
    <location>
        <begin position="138"/>
        <end position="140"/>
    </location>
</feature>
<feature type="region of interest" description="Interaction with tRNA" evidence="1">
    <location>
        <begin position="293"/>
        <end position="294"/>
    </location>
</feature>
<feature type="active site" description="Nucleophile" evidence="1">
    <location>
        <position position="92"/>
    </location>
</feature>
<feature type="active site" description="Cysteine persulfide intermediate" evidence="1">
    <location>
        <position position="191"/>
    </location>
</feature>
<feature type="binding site" evidence="1">
    <location>
        <begin position="6"/>
        <end position="13"/>
    </location>
    <ligand>
        <name>ATP</name>
        <dbReference type="ChEBI" id="CHEBI:30616"/>
    </ligand>
</feature>
<feature type="binding site" evidence="1">
    <location>
        <position position="32"/>
    </location>
    <ligand>
        <name>ATP</name>
        <dbReference type="ChEBI" id="CHEBI:30616"/>
    </ligand>
</feature>
<feature type="binding site" evidence="1">
    <location>
        <position position="116"/>
    </location>
    <ligand>
        <name>ATP</name>
        <dbReference type="ChEBI" id="CHEBI:30616"/>
    </ligand>
</feature>
<feature type="site" description="Interaction with tRNA" evidence="1">
    <location>
        <position position="117"/>
    </location>
</feature>
<feature type="site" description="Interaction with tRNA" evidence="1">
    <location>
        <position position="325"/>
    </location>
</feature>
<feature type="disulfide bond" description="Alternate" evidence="1">
    <location>
        <begin position="92"/>
        <end position="191"/>
    </location>
</feature>
<name>MNMA_HELHP</name>
<protein>
    <recommendedName>
        <fullName evidence="1">tRNA-specific 2-thiouridylase MnmA</fullName>
        <ecNumber evidence="1">2.8.1.13</ecNumber>
    </recommendedName>
</protein>
<accession>Q7U320</accession>